<gene>
    <name evidence="1" type="primary">nusB</name>
    <name type="ordered locus">MAE_23230</name>
</gene>
<name>NUSB_MICAN</name>
<proteinExistence type="inferred from homology"/>
<reference key="1">
    <citation type="journal article" date="2007" name="DNA Res.">
        <title>Complete genomic structure of the bloom-forming toxic cyanobacterium Microcystis aeruginosa NIES-843.</title>
        <authorList>
            <person name="Kaneko T."/>
            <person name="Nakajima N."/>
            <person name="Okamoto S."/>
            <person name="Suzuki I."/>
            <person name="Tanabe Y."/>
            <person name="Tamaoki M."/>
            <person name="Nakamura Y."/>
            <person name="Kasai F."/>
            <person name="Watanabe A."/>
            <person name="Kawashima K."/>
            <person name="Kishida Y."/>
            <person name="Ono A."/>
            <person name="Shimizu Y."/>
            <person name="Takahashi C."/>
            <person name="Minami C."/>
            <person name="Fujishiro T."/>
            <person name="Kohara M."/>
            <person name="Katoh M."/>
            <person name="Nakazaki N."/>
            <person name="Nakayama S."/>
            <person name="Yamada M."/>
            <person name="Tabata S."/>
            <person name="Watanabe M.M."/>
        </authorList>
    </citation>
    <scope>NUCLEOTIDE SEQUENCE [LARGE SCALE GENOMIC DNA]</scope>
    <source>
        <strain>NIES-843 / IAM M-247</strain>
    </source>
</reference>
<feature type="chain" id="PRO_1000192448" description="Transcription antitermination protein NusB">
    <location>
        <begin position="1"/>
        <end position="217"/>
    </location>
</feature>
<organism>
    <name type="scientific">Microcystis aeruginosa (strain NIES-843 / IAM M-2473)</name>
    <dbReference type="NCBI Taxonomy" id="449447"/>
    <lineage>
        <taxon>Bacteria</taxon>
        <taxon>Bacillati</taxon>
        <taxon>Cyanobacteriota</taxon>
        <taxon>Cyanophyceae</taxon>
        <taxon>Oscillatoriophycideae</taxon>
        <taxon>Chroococcales</taxon>
        <taxon>Microcystaceae</taxon>
        <taxon>Microcystis</taxon>
    </lineage>
</organism>
<evidence type="ECO:0000255" key="1">
    <source>
        <dbReference type="HAMAP-Rule" id="MF_00073"/>
    </source>
</evidence>
<dbReference type="EMBL" id="AP009552">
    <property type="protein sequence ID" value="BAG02145.1"/>
    <property type="molecule type" value="Genomic_DNA"/>
</dbReference>
<dbReference type="RefSeq" id="WP_002796775.1">
    <property type="nucleotide sequence ID" value="NC_010296.1"/>
</dbReference>
<dbReference type="SMR" id="B0JGZ3"/>
<dbReference type="STRING" id="449447.MAE_23230"/>
<dbReference type="PaxDb" id="449447-MAE_23230"/>
<dbReference type="EnsemblBacteria" id="BAG02145">
    <property type="protein sequence ID" value="BAG02145"/>
    <property type="gene ID" value="MAE_23230"/>
</dbReference>
<dbReference type="KEGG" id="mar:MAE_23230"/>
<dbReference type="eggNOG" id="COG0781">
    <property type="taxonomic scope" value="Bacteria"/>
</dbReference>
<dbReference type="HOGENOM" id="CLU_087843_0_0_3"/>
<dbReference type="BioCyc" id="MAER449447:MAE_RS10135-MONOMER"/>
<dbReference type="Proteomes" id="UP000001510">
    <property type="component" value="Chromosome"/>
</dbReference>
<dbReference type="GO" id="GO:0005829">
    <property type="term" value="C:cytosol"/>
    <property type="evidence" value="ECO:0007669"/>
    <property type="project" value="TreeGrafter"/>
</dbReference>
<dbReference type="GO" id="GO:0003723">
    <property type="term" value="F:RNA binding"/>
    <property type="evidence" value="ECO:0007669"/>
    <property type="project" value="UniProtKB-UniRule"/>
</dbReference>
<dbReference type="GO" id="GO:0006353">
    <property type="term" value="P:DNA-templated transcription termination"/>
    <property type="evidence" value="ECO:0007669"/>
    <property type="project" value="UniProtKB-UniRule"/>
</dbReference>
<dbReference type="GO" id="GO:0031564">
    <property type="term" value="P:transcription antitermination"/>
    <property type="evidence" value="ECO:0007669"/>
    <property type="project" value="UniProtKB-KW"/>
</dbReference>
<dbReference type="Gene3D" id="1.10.940.10">
    <property type="entry name" value="NusB-like"/>
    <property type="match status" value="1"/>
</dbReference>
<dbReference type="HAMAP" id="MF_00073">
    <property type="entry name" value="NusB"/>
    <property type="match status" value="1"/>
</dbReference>
<dbReference type="InterPro" id="IPR035926">
    <property type="entry name" value="NusB-like_sf"/>
</dbReference>
<dbReference type="InterPro" id="IPR011605">
    <property type="entry name" value="NusB_fam"/>
</dbReference>
<dbReference type="InterPro" id="IPR006027">
    <property type="entry name" value="NusB_RsmB_TIM44"/>
</dbReference>
<dbReference type="NCBIfam" id="TIGR01951">
    <property type="entry name" value="nusB"/>
    <property type="match status" value="1"/>
</dbReference>
<dbReference type="PANTHER" id="PTHR11078:SF3">
    <property type="entry name" value="ANTITERMINATION NUSB DOMAIN-CONTAINING PROTEIN"/>
    <property type="match status" value="1"/>
</dbReference>
<dbReference type="PANTHER" id="PTHR11078">
    <property type="entry name" value="N UTILIZATION SUBSTANCE PROTEIN B-RELATED"/>
    <property type="match status" value="1"/>
</dbReference>
<dbReference type="Pfam" id="PF01029">
    <property type="entry name" value="NusB"/>
    <property type="match status" value="1"/>
</dbReference>
<dbReference type="SUPFAM" id="SSF48013">
    <property type="entry name" value="NusB-like"/>
    <property type="match status" value="1"/>
</dbReference>
<keyword id="KW-0694">RNA-binding</keyword>
<keyword id="KW-0804">Transcription</keyword>
<keyword id="KW-0889">Transcription antitermination</keyword>
<keyword id="KW-0805">Transcription regulation</keyword>
<comment type="function">
    <text evidence="1">Involved in transcription antitermination. Required for transcription of ribosomal RNA (rRNA) genes. Binds specifically to the boxA antiterminator sequence of the ribosomal RNA (rrn) operons.</text>
</comment>
<comment type="similarity">
    <text evidence="1">Belongs to the NusB family.</text>
</comment>
<accession>B0JGZ3</accession>
<sequence>MSPRQQPRRIARELALLSLSQIKGNPENLEQQTLNDLILVAVRTLTLEIQETLETAAAEISRGNERILASDTKATNLKSAQTMVKEAISLTHNAINRLGTVIDFPEIVQLSSQYEVREYALELIGTVYRRRAEIEQELTGALVDWQLHRLPRIDRDILQIAVAEMLYLDLPQKVAINEAIELAKRYSDDEGYRFINGVLRRVTNKLNESEKAVSTQS</sequence>
<protein>
    <recommendedName>
        <fullName evidence="1">Transcription antitermination protein NusB</fullName>
    </recommendedName>
    <alternativeName>
        <fullName evidence="1">Antitermination factor NusB</fullName>
    </alternativeName>
</protein>